<name>FPG_RHIWR</name>
<keyword id="KW-0227">DNA damage</keyword>
<keyword id="KW-0234">DNA repair</keyword>
<keyword id="KW-0238">DNA-binding</keyword>
<keyword id="KW-0326">Glycosidase</keyword>
<keyword id="KW-0378">Hydrolase</keyword>
<keyword id="KW-0456">Lyase</keyword>
<keyword id="KW-0479">Metal-binding</keyword>
<keyword id="KW-0511">Multifunctional enzyme</keyword>
<keyword id="KW-1185">Reference proteome</keyword>
<keyword id="KW-0862">Zinc</keyword>
<keyword id="KW-0863">Zinc-finger</keyword>
<proteinExistence type="inferred from homology"/>
<dbReference type="EC" id="3.2.2.23" evidence="2"/>
<dbReference type="EC" id="4.2.99.18" evidence="2"/>
<dbReference type="EMBL" id="CP000699">
    <property type="protein sequence ID" value="ABQ71222.1"/>
    <property type="molecule type" value="Genomic_DNA"/>
</dbReference>
<dbReference type="SMR" id="A5VG06"/>
<dbReference type="STRING" id="392499.Swit_4885"/>
<dbReference type="PaxDb" id="392499-Swit_4885"/>
<dbReference type="KEGG" id="swi:Swit_4885"/>
<dbReference type="eggNOG" id="COG0266">
    <property type="taxonomic scope" value="Bacteria"/>
</dbReference>
<dbReference type="HOGENOM" id="CLU_038423_1_1_5"/>
<dbReference type="OrthoDB" id="9800855at2"/>
<dbReference type="Proteomes" id="UP000001989">
    <property type="component" value="Chromosome"/>
</dbReference>
<dbReference type="GO" id="GO:0034039">
    <property type="term" value="F:8-oxo-7,8-dihydroguanine DNA N-glycosylase activity"/>
    <property type="evidence" value="ECO:0007669"/>
    <property type="project" value="TreeGrafter"/>
</dbReference>
<dbReference type="GO" id="GO:0140078">
    <property type="term" value="F:class I DNA-(apurinic or apyrimidinic site) endonuclease activity"/>
    <property type="evidence" value="ECO:0007669"/>
    <property type="project" value="UniProtKB-EC"/>
</dbReference>
<dbReference type="GO" id="GO:0003684">
    <property type="term" value="F:damaged DNA binding"/>
    <property type="evidence" value="ECO:0007669"/>
    <property type="project" value="InterPro"/>
</dbReference>
<dbReference type="GO" id="GO:0008270">
    <property type="term" value="F:zinc ion binding"/>
    <property type="evidence" value="ECO:0007669"/>
    <property type="project" value="UniProtKB-UniRule"/>
</dbReference>
<dbReference type="GO" id="GO:0006284">
    <property type="term" value="P:base-excision repair"/>
    <property type="evidence" value="ECO:0007669"/>
    <property type="project" value="InterPro"/>
</dbReference>
<dbReference type="CDD" id="cd08966">
    <property type="entry name" value="EcFpg-like_N"/>
    <property type="match status" value="1"/>
</dbReference>
<dbReference type="FunFam" id="1.10.8.50:FF:000003">
    <property type="entry name" value="Formamidopyrimidine-DNA glycosylase"/>
    <property type="match status" value="1"/>
</dbReference>
<dbReference type="Gene3D" id="1.10.8.50">
    <property type="match status" value="1"/>
</dbReference>
<dbReference type="Gene3D" id="3.20.190.10">
    <property type="entry name" value="MutM-like, N-terminal"/>
    <property type="match status" value="1"/>
</dbReference>
<dbReference type="HAMAP" id="MF_00103">
    <property type="entry name" value="Fapy_DNA_glycosyl"/>
    <property type="match status" value="1"/>
</dbReference>
<dbReference type="InterPro" id="IPR015886">
    <property type="entry name" value="DNA_glyclase/AP_lyase_DNA-bd"/>
</dbReference>
<dbReference type="InterPro" id="IPR015887">
    <property type="entry name" value="DNA_glyclase_Znf_dom_DNA_BS"/>
</dbReference>
<dbReference type="InterPro" id="IPR020629">
    <property type="entry name" value="Formamido-pyr_DNA_Glyclase"/>
</dbReference>
<dbReference type="InterPro" id="IPR012319">
    <property type="entry name" value="FPG_cat"/>
</dbReference>
<dbReference type="InterPro" id="IPR035937">
    <property type="entry name" value="MutM-like_N-ter"/>
</dbReference>
<dbReference type="InterPro" id="IPR010979">
    <property type="entry name" value="Ribosomal_uS13-like_H2TH"/>
</dbReference>
<dbReference type="InterPro" id="IPR000214">
    <property type="entry name" value="Znf_DNA_glyclase/AP_lyase"/>
</dbReference>
<dbReference type="InterPro" id="IPR010663">
    <property type="entry name" value="Znf_FPG/IleRS"/>
</dbReference>
<dbReference type="NCBIfam" id="TIGR00577">
    <property type="entry name" value="fpg"/>
    <property type="match status" value="1"/>
</dbReference>
<dbReference type="NCBIfam" id="NF002211">
    <property type="entry name" value="PRK01103.1"/>
    <property type="match status" value="1"/>
</dbReference>
<dbReference type="PANTHER" id="PTHR22993">
    <property type="entry name" value="FORMAMIDOPYRIMIDINE-DNA GLYCOSYLASE"/>
    <property type="match status" value="1"/>
</dbReference>
<dbReference type="PANTHER" id="PTHR22993:SF9">
    <property type="entry name" value="FORMAMIDOPYRIMIDINE-DNA GLYCOSYLASE"/>
    <property type="match status" value="1"/>
</dbReference>
<dbReference type="Pfam" id="PF01149">
    <property type="entry name" value="Fapy_DNA_glyco"/>
    <property type="match status" value="1"/>
</dbReference>
<dbReference type="Pfam" id="PF06831">
    <property type="entry name" value="H2TH"/>
    <property type="match status" value="1"/>
</dbReference>
<dbReference type="Pfam" id="PF06827">
    <property type="entry name" value="zf-FPG_IleRS"/>
    <property type="match status" value="1"/>
</dbReference>
<dbReference type="SMART" id="SM00898">
    <property type="entry name" value="Fapy_DNA_glyco"/>
    <property type="match status" value="1"/>
</dbReference>
<dbReference type="SMART" id="SM01232">
    <property type="entry name" value="H2TH"/>
    <property type="match status" value="1"/>
</dbReference>
<dbReference type="SUPFAM" id="SSF57716">
    <property type="entry name" value="Glucocorticoid receptor-like (DNA-binding domain)"/>
    <property type="match status" value="1"/>
</dbReference>
<dbReference type="SUPFAM" id="SSF81624">
    <property type="entry name" value="N-terminal domain of MutM-like DNA repair proteins"/>
    <property type="match status" value="1"/>
</dbReference>
<dbReference type="SUPFAM" id="SSF46946">
    <property type="entry name" value="S13-like H2TH domain"/>
    <property type="match status" value="1"/>
</dbReference>
<dbReference type="PROSITE" id="PS51068">
    <property type="entry name" value="FPG_CAT"/>
    <property type="match status" value="1"/>
</dbReference>
<dbReference type="PROSITE" id="PS01242">
    <property type="entry name" value="ZF_FPG_1"/>
    <property type="match status" value="1"/>
</dbReference>
<dbReference type="PROSITE" id="PS51066">
    <property type="entry name" value="ZF_FPG_2"/>
    <property type="match status" value="1"/>
</dbReference>
<feature type="initiator methionine" description="Removed" evidence="1">
    <location>
        <position position="1"/>
    </location>
</feature>
<feature type="chain" id="PRO_1000008784" description="Formamidopyrimidine-DNA glycosylase">
    <location>
        <begin position="2"/>
        <end position="270"/>
    </location>
</feature>
<feature type="zinc finger region" description="FPG-type" evidence="2">
    <location>
        <begin position="237"/>
        <end position="270"/>
    </location>
</feature>
<feature type="active site" description="Schiff-base intermediate with DNA" evidence="2">
    <location>
        <position position="2"/>
    </location>
</feature>
<feature type="active site" description="Proton donor" evidence="2">
    <location>
        <position position="3"/>
    </location>
</feature>
<feature type="active site" description="Proton donor; for beta-elimination activity" evidence="2">
    <location>
        <position position="58"/>
    </location>
</feature>
<feature type="active site" description="Proton donor; for delta-elimination activity" evidence="2">
    <location>
        <position position="260"/>
    </location>
</feature>
<feature type="binding site" evidence="2">
    <location>
        <position position="90"/>
    </location>
    <ligand>
        <name>DNA</name>
        <dbReference type="ChEBI" id="CHEBI:16991"/>
    </ligand>
</feature>
<feature type="binding site" evidence="2">
    <location>
        <position position="109"/>
    </location>
    <ligand>
        <name>DNA</name>
        <dbReference type="ChEBI" id="CHEBI:16991"/>
    </ligand>
</feature>
<feature type="binding site" evidence="2">
    <location>
        <position position="152"/>
    </location>
    <ligand>
        <name>DNA</name>
        <dbReference type="ChEBI" id="CHEBI:16991"/>
    </ligand>
</feature>
<reference key="1">
    <citation type="journal article" date="2010" name="J. Bacteriol.">
        <title>Genome sequence of the dioxin-mineralizing bacterium Sphingomonas wittichii RW1.</title>
        <authorList>
            <person name="Miller T.R."/>
            <person name="Delcher A.L."/>
            <person name="Salzberg S.L."/>
            <person name="Saunders E."/>
            <person name="Detter J.C."/>
            <person name="Halden R.U."/>
        </authorList>
    </citation>
    <scope>NUCLEOTIDE SEQUENCE [LARGE SCALE GENOMIC DNA]</scope>
    <source>
        <strain>DSM 6014 / CCUG 31198 / JCM 15750 / NBRC 105917 / EY 4224 / RW1</strain>
    </source>
</reference>
<accession>A5VG06</accession>
<sequence>MPELPEVETTVRGLRPPLEGRRLTRVETRRADLRRPFPADLRQRMTGATITGLGRRAKYGLIETDRGDVMVFHLGMSGRWRIDPSEIGAHDHLVLETDEGRTLSLCDPRRFGSVDLVRGEELAGFGPFKALGPEPLGPDLTGAHLAGALEGRVAPIKAMLLDQRIVAGLGNIYVCEALHMTGIAPTTMAGRIAKKRLDRLVDSIREVLAAAIEAGGSTLRDYARPDGELGYFAKQWRVYGREGEPCHCGTVIRRRVDGGRSTFYCPKCQK</sequence>
<protein>
    <recommendedName>
        <fullName evidence="2">Formamidopyrimidine-DNA glycosylase</fullName>
        <shortName evidence="2">Fapy-DNA glycosylase</shortName>
        <ecNumber evidence="2">3.2.2.23</ecNumber>
    </recommendedName>
    <alternativeName>
        <fullName evidence="2">DNA-(apurinic or apyrimidinic site) lyase MutM</fullName>
        <shortName evidence="2">AP lyase MutM</shortName>
        <ecNumber evidence="2">4.2.99.18</ecNumber>
    </alternativeName>
</protein>
<gene>
    <name evidence="2" type="primary">mutM</name>
    <name evidence="2" type="synonym">fpg</name>
    <name type="ordered locus">Swit_4885</name>
</gene>
<organism>
    <name type="scientific">Rhizorhabdus wittichii (strain DSM 6014 / CCUG 31198 / JCM 15750 / NBRC 105917 / EY 4224 / RW1)</name>
    <name type="common">Sphingomonas wittichii</name>
    <dbReference type="NCBI Taxonomy" id="392499"/>
    <lineage>
        <taxon>Bacteria</taxon>
        <taxon>Pseudomonadati</taxon>
        <taxon>Pseudomonadota</taxon>
        <taxon>Alphaproteobacteria</taxon>
        <taxon>Sphingomonadales</taxon>
        <taxon>Sphingomonadaceae</taxon>
        <taxon>Rhizorhabdus</taxon>
    </lineage>
</organism>
<comment type="function">
    <text evidence="2">Involved in base excision repair of DNA damaged by oxidation or by mutagenic agents. Acts as a DNA glycosylase that recognizes and removes damaged bases. Has a preference for oxidized purines, such as 7,8-dihydro-8-oxoguanine (8-oxoG). Has AP (apurinic/apyrimidinic) lyase activity and introduces nicks in the DNA strand. Cleaves the DNA backbone by beta-delta elimination to generate a single-strand break at the site of the removed base with both 3'- and 5'-phosphates.</text>
</comment>
<comment type="catalytic activity">
    <reaction evidence="2">
        <text>Hydrolysis of DNA containing ring-opened 7-methylguanine residues, releasing 2,6-diamino-4-hydroxy-5-(N-methyl)formamidopyrimidine.</text>
        <dbReference type="EC" id="3.2.2.23"/>
    </reaction>
</comment>
<comment type="catalytic activity">
    <reaction evidence="2">
        <text>2'-deoxyribonucleotide-(2'-deoxyribose 5'-phosphate)-2'-deoxyribonucleotide-DNA = a 3'-end 2'-deoxyribonucleotide-(2,3-dehydro-2,3-deoxyribose 5'-phosphate)-DNA + a 5'-end 5'-phospho-2'-deoxyribonucleoside-DNA + H(+)</text>
        <dbReference type="Rhea" id="RHEA:66592"/>
        <dbReference type="Rhea" id="RHEA-COMP:13180"/>
        <dbReference type="Rhea" id="RHEA-COMP:16897"/>
        <dbReference type="Rhea" id="RHEA-COMP:17067"/>
        <dbReference type="ChEBI" id="CHEBI:15378"/>
        <dbReference type="ChEBI" id="CHEBI:136412"/>
        <dbReference type="ChEBI" id="CHEBI:157695"/>
        <dbReference type="ChEBI" id="CHEBI:167181"/>
        <dbReference type="EC" id="4.2.99.18"/>
    </reaction>
</comment>
<comment type="cofactor">
    <cofactor evidence="2">
        <name>Zn(2+)</name>
        <dbReference type="ChEBI" id="CHEBI:29105"/>
    </cofactor>
    <text evidence="2">Binds 1 zinc ion per subunit.</text>
</comment>
<comment type="subunit">
    <text evidence="2">Monomer.</text>
</comment>
<comment type="similarity">
    <text evidence="2">Belongs to the FPG family.</text>
</comment>
<evidence type="ECO:0000250" key="1"/>
<evidence type="ECO:0000255" key="2">
    <source>
        <dbReference type="HAMAP-Rule" id="MF_00103"/>
    </source>
</evidence>